<name>MTF1_FUSNU</name>
<feature type="chain" id="PRO_0000087876" description="Type II methyltransferase M.FnuDI">
    <location>
        <begin position="1"/>
        <end position="344"/>
    </location>
</feature>
<feature type="domain" description="SAM-dependent MTase C5-type" evidence="1">
    <location>
        <begin position="1"/>
        <end position="330"/>
    </location>
</feature>
<feature type="active site" evidence="1 2">
    <location>
        <position position="71"/>
    </location>
</feature>
<organism>
    <name type="scientific">Fusobacterium nucleatum</name>
    <dbReference type="NCBI Taxonomy" id="851"/>
    <lineage>
        <taxon>Bacteria</taxon>
        <taxon>Fusobacteriati</taxon>
        <taxon>Fusobacteriota</taxon>
        <taxon>Fusobacteriia</taxon>
        <taxon>Fusobacteriales</taxon>
        <taxon>Fusobacteriaceae</taxon>
        <taxon>Fusobacterium</taxon>
    </lineage>
</organism>
<dbReference type="EC" id="2.1.1.37"/>
<dbReference type="EMBL" id="AF051374">
    <property type="protein sequence ID" value="AAC05695.1"/>
    <property type="molecule type" value="Genomic_DNA"/>
</dbReference>
<dbReference type="SMR" id="P34906"/>
<dbReference type="REBASE" id="3402">
    <property type="entry name" value="M.FnuDI"/>
</dbReference>
<dbReference type="PRO" id="PR:P34906"/>
<dbReference type="GO" id="GO:0003886">
    <property type="term" value="F:DNA (cytosine-5-)-methyltransferase activity"/>
    <property type="evidence" value="ECO:0007669"/>
    <property type="project" value="UniProtKB-EC"/>
</dbReference>
<dbReference type="GO" id="GO:0003677">
    <property type="term" value="F:DNA binding"/>
    <property type="evidence" value="ECO:0007669"/>
    <property type="project" value="UniProtKB-KW"/>
</dbReference>
<dbReference type="GO" id="GO:0009307">
    <property type="term" value="P:DNA restriction-modification system"/>
    <property type="evidence" value="ECO:0007669"/>
    <property type="project" value="UniProtKB-KW"/>
</dbReference>
<dbReference type="GO" id="GO:0032259">
    <property type="term" value="P:methylation"/>
    <property type="evidence" value="ECO:0007669"/>
    <property type="project" value="UniProtKB-KW"/>
</dbReference>
<dbReference type="GO" id="GO:0044027">
    <property type="term" value="P:negative regulation of gene expression via chromosomal CpG island methylation"/>
    <property type="evidence" value="ECO:0007669"/>
    <property type="project" value="TreeGrafter"/>
</dbReference>
<dbReference type="CDD" id="cd00315">
    <property type="entry name" value="Cyt_C5_DNA_methylase"/>
    <property type="match status" value="1"/>
</dbReference>
<dbReference type="Gene3D" id="3.90.120.10">
    <property type="entry name" value="DNA Methylase, subunit A, domain 2"/>
    <property type="match status" value="1"/>
</dbReference>
<dbReference type="Gene3D" id="3.40.50.150">
    <property type="entry name" value="Vaccinia Virus protein VP39"/>
    <property type="match status" value="1"/>
</dbReference>
<dbReference type="InterPro" id="IPR050390">
    <property type="entry name" value="C5-Methyltransferase"/>
</dbReference>
<dbReference type="InterPro" id="IPR018117">
    <property type="entry name" value="C5_DNA_meth_AS"/>
</dbReference>
<dbReference type="InterPro" id="IPR001525">
    <property type="entry name" value="C5_MeTfrase"/>
</dbReference>
<dbReference type="InterPro" id="IPR031303">
    <property type="entry name" value="C5_meth_CS"/>
</dbReference>
<dbReference type="InterPro" id="IPR029063">
    <property type="entry name" value="SAM-dependent_MTases_sf"/>
</dbReference>
<dbReference type="NCBIfam" id="TIGR00675">
    <property type="entry name" value="dcm"/>
    <property type="match status" value="1"/>
</dbReference>
<dbReference type="PANTHER" id="PTHR10629">
    <property type="entry name" value="CYTOSINE-SPECIFIC METHYLTRANSFERASE"/>
    <property type="match status" value="1"/>
</dbReference>
<dbReference type="PANTHER" id="PTHR10629:SF52">
    <property type="entry name" value="DNA (CYTOSINE-5)-METHYLTRANSFERASE 1"/>
    <property type="match status" value="1"/>
</dbReference>
<dbReference type="Pfam" id="PF00145">
    <property type="entry name" value="DNA_methylase"/>
    <property type="match status" value="1"/>
</dbReference>
<dbReference type="PRINTS" id="PR00105">
    <property type="entry name" value="C5METTRFRASE"/>
</dbReference>
<dbReference type="SUPFAM" id="SSF53335">
    <property type="entry name" value="S-adenosyl-L-methionine-dependent methyltransferases"/>
    <property type="match status" value="1"/>
</dbReference>
<dbReference type="PROSITE" id="PS00094">
    <property type="entry name" value="C5_MTASE_1"/>
    <property type="match status" value="1"/>
</dbReference>
<dbReference type="PROSITE" id="PS00095">
    <property type="entry name" value="C5_MTASE_2"/>
    <property type="match status" value="1"/>
</dbReference>
<dbReference type="PROSITE" id="PS51679">
    <property type="entry name" value="SAM_MT_C5"/>
    <property type="match status" value="1"/>
</dbReference>
<sequence length="344" mass="39913">MKLLSLFSGAGGLDLGFERAGFEIIVANEYDKTIWETYEKNHKAKLIKKDIREILSEELPKSDGIIGGPPCQSWSEAGSLRGINDPRGKLFYEYIRILKDIQPKFFLAENVKGMLSKRNTEAVKDIIKEFEEAGYNVFIKLLNAFDYGVAQDRERVFYVGFRKDLNISNFEFPYPISEKERKYLKDSIWDLKDNALPGKDKNKTNADDCIVENHEYLTGSYSTIFMSRNRVRQWEQPAFTVQASGRQCQLHPQAPTMIKIDKNMYKFVAGKENLYRRLSIRECARIQGFPDTFKFYYTSLEDGYKMVGNAVPVDLAYIIAKRIKETLTDKEKIKKEIRQKTLFD</sequence>
<keyword id="KW-0238">DNA-binding</keyword>
<keyword id="KW-0489">Methyltransferase</keyword>
<keyword id="KW-0680">Restriction system</keyword>
<keyword id="KW-0949">S-adenosyl-L-methionine</keyword>
<keyword id="KW-0808">Transferase</keyword>
<proteinExistence type="inferred from homology"/>
<comment type="function">
    <text evidence="3">A methylase, recognizes the double-stranded sequence 5'-GGCC-3', methylates C-? on both strands, and protects the DNA from cleavage by the FnuDI endonuclease.</text>
</comment>
<comment type="catalytic activity">
    <reaction evidence="2">
        <text>a 2'-deoxycytidine in DNA + S-adenosyl-L-methionine = a 5-methyl-2'-deoxycytidine in DNA + S-adenosyl-L-homocysteine + H(+)</text>
        <dbReference type="Rhea" id="RHEA:13681"/>
        <dbReference type="Rhea" id="RHEA-COMP:11369"/>
        <dbReference type="Rhea" id="RHEA-COMP:11370"/>
        <dbReference type="ChEBI" id="CHEBI:15378"/>
        <dbReference type="ChEBI" id="CHEBI:57856"/>
        <dbReference type="ChEBI" id="CHEBI:59789"/>
        <dbReference type="ChEBI" id="CHEBI:85452"/>
        <dbReference type="ChEBI" id="CHEBI:85454"/>
        <dbReference type="EC" id="2.1.1.37"/>
    </reaction>
</comment>
<comment type="similarity">
    <text evidence="1">Belongs to the class I-like SAM-binding methyltransferase superfamily. C5-methyltransferase family.</text>
</comment>
<reference key="1">
    <citation type="patent" date="1991-01-29" number="US4988620">
        <title>Method for producing the FnuDI restriction endonuclease and methylase.</title>
        <authorList>
            <person name="Zhang B.-H."/>
            <person name="Wilson G.G."/>
        </authorList>
    </citation>
    <scope>NUCLEOTIDE SEQUENCE [GENOMIC DNA]</scope>
    <source>
        <strain>D</strain>
    </source>
</reference>
<reference key="2">
    <citation type="journal article" date="2003" name="Nucleic Acids Res.">
        <title>A nomenclature for restriction enzymes, DNA methyltransferases, homing endonucleases and their genes.</title>
        <authorList>
            <person name="Roberts R.J."/>
            <person name="Belfort M."/>
            <person name="Bestor T."/>
            <person name="Bhagwat A.S."/>
            <person name="Bickle T.A."/>
            <person name="Bitinaite J."/>
            <person name="Blumenthal R.M."/>
            <person name="Degtyarev S.K."/>
            <person name="Dryden D.T."/>
            <person name="Dybvig K."/>
            <person name="Firman K."/>
            <person name="Gromova E.S."/>
            <person name="Gumport R.I."/>
            <person name="Halford S.E."/>
            <person name="Hattman S."/>
            <person name="Heitman J."/>
            <person name="Hornby D.P."/>
            <person name="Janulaitis A."/>
            <person name="Jeltsch A."/>
            <person name="Josephsen J."/>
            <person name="Kiss A."/>
            <person name="Klaenhammer T.R."/>
            <person name="Kobayashi I."/>
            <person name="Kong H."/>
            <person name="Krueger D.H."/>
            <person name="Lacks S."/>
            <person name="Marinus M.G."/>
            <person name="Miyahara M."/>
            <person name="Morgan R.D."/>
            <person name="Murray N.E."/>
            <person name="Nagaraja V."/>
            <person name="Piekarowicz A."/>
            <person name="Pingoud A."/>
            <person name="Raleigh E."/>
            <person name="Rao D.N."/>
            <person name="Reich N."/>
            <person name="Repin V.E."/>
            <person name="Selker E.U."/>
            <person name="Shaw P.C."/>
            <person name="Stein D.C."/>
            <person name="Stoddard B.L."/>
            <person name="Szybalski W."/>
            <person name="Trautner T.A."/>
            <person name="Van Etten J.L."/>
            <person name="Vitor J.M."/>
            <person name="Wilson G.G."/>
            <person name="Xu S.Y."/>
        </authorList>
    </citation>
    <scope>NOMENCLATURE</scope>
</reference>
<evidence type="ECO:0000255" key="1">
    <source>
        <dbReference type="PROSITE-ProRule" id="PRU01016"/>
    </source>
</evidence>
<evidence type="ECO:0000255" key="2">
    <source>
        <dbReference type="PROSITE-ProRule" id="PRU10018"/>
    </source>
</evidence>
<evidence type="ECO:0000303" key="3">
    <source>
    </source>
</evidence>
<protein>
    <recommendedName>
        <fullName evidence="3">Type II methyltransferase M.FnuDI</fullName>
        <shortName evidence="3">M.FnuDI</shortName>
        <ecNumber>2.1.1.37</ecNumber>
    </recommendedName>
    <alternativeName>
        <fullName>Cytosine-specific methyltransferase FnuDI</fullName>
    </alternativeName>
    <alternativeName>
        <fullName>Modification methylase FnuDI</fullName>
    </alternativeName>
</protein>
<gene>
    <name type="primary">fnuDIM</name>
</gene>
<accession>P34906</accession>